<evidence type="ECO:0000250" key="1"/>
<evidence type="ECO:0000250" key="2">
    <source>
        <dbReference type="UniProtKB" id="P60022"/>
    </source>
</evidence>
<evidence type="ECO:0000255" key="3"/>
<evidence type="ECO:0000305" key="4"/>
<keyword id="KW-0044">Antibiotic</keyword>
<keyword id="KW-0929">Antimicrobial</keyword>
<keyword id="KW-0211">Defensin</keyword>
<keyword id="KW-1015">Disulfide bond</keyword>
<keyword id="KW-0472">Membrane</keyword>
<keyword id="KW-0964">Secreted</keyword>
<keyword id="KW-0732">Signal</keyword>
<sequence length="68" mass="7543">MRTSYLLLFTLCLLLSEMASGDNFLTGLGHRSDHYICVRSGGQCLYSACPIYTKIQGTCYHGKAKCCK</sequence>
<proteinExistence type="inferred from homology"/>
<feature type="signal peptide" evidence="3">
    <location>
        <begin position="1"/>
        <end position="21"/>
    </location>
</feature>
<feature type="propeptide" id="PRO_0000006892" evidence="1">
    <location>
        <begin position="22"/>
        <end position="32"/>
    </location>
</feature>
<feature type="peptide" id="PRO_0000006893" description="Beta-defensin 1">
    <location>
        <begin position="33"/>
        <end position="68"/>
    </location>
</feature>
<feature type="disulfide bond" evidence="1">
    <location>
        <begin position="37"/>
        <end position="66"/>
    </location>
</feature>
<feature type="disulfide bond" evidence="1">
    <location>
        <begin position="44"/>
        <end position="59"/>
    </location>
</feature>
<feature type="disulfide bond" evidence="1">
    <location>
        <begin position="49"/>
        <end position="67"/>
    </location>
</feature>
<name>DEFB1_CERER</name>
<accession>Q95M67</accession>
<protein>
    <recommendedName>
        <fullName>Beta-defensin 1</fullName>
        <shortName>BD-1</shortName>
    </recommendedName>
    <alternativeName>
        <fullName>Defensin, beta 1</fullName>
    </alternativeName>
</protein>
<comment type="function">
    <text evidence="2">Has bactericidal activity. May act as a ligand for C-C chemokine receptor CCR6. Positively regulates the sperm motility and bactericidal activity in a CCR6-dependent manner. Binds to CCR6 and triggers Ca2+ mobilization in the sperm which is important for its motility.</text>
</comment>
<comment type="subunit">
    <text evidence="2">Monomer. Homodimer.</text>
</comment>
<comment type="subcellular location">
    <subcellularLocation>
        <location evidence="2">Secreted</location>
    </subcellularLocation>
    <subcellularLocation>
        <location evidence="2">Membrane</location>
    </subcellularLocation>
    <text evidence="2">Associates with tumor cell membrane-derived microvesicles.</text>
</comment>
<comment type="similarity">
    <text evidence="4">Belongs to the beta-defensin family.</text>
</comment>
<dbReference type="EMBL" id="AY033760">
    <property type="protein sequence ID" value="AAK61472.1"/>
    <property type="molecule type" value="Genomic_DNA"/>
</dbReference>
<dbReference type="EMBL" id="AY033745">
    <property type="protein sequence ID" value="AAK61472.1"/>
    <property type="status" value="JOINED"/>
    <property type="molecule type" value="Genomic_DNA"/>
</dbReference>
<dbReference type="SMR" id="Q95M67"/>
<dbReference type="GO" id="GO:0005615">
    <property type="term" value="C:extracellular space"/>
    <property type="evidence" value="ECO:0007669"/>
    <property type="project" value="TreeGrafter"/>
</dbReference>
<dbReference type="GO" id="GO:0016020">
    <property type="term" value="C:membrane"/>
    <property type="evidence" value="ECO:0000250"/>
    <property type="project" value="UniProtKB"/>
</dbReference>
<dbReference type="GO" id="GO:1990742">
    <property type="term" value="C:microvesicle"/>
    <property type="evidence" value="ECO:0000250"/>
    <property type="project" value="UniProtKB"/>
</dbReference>
<dbReference type="GO" id="GO:0097225">
    <property type="term" value="C:sperm midpiece"/>
    <property type="evidence" value="ECO:0000250"/>
    <property type="project" value="UniProtKB"/>
</dbReference>
<dbReference type="GO" id="GO:0031731">
    <property type="term" value="F:CCR6 chemokine receptor binding"/>
    <property type="evidence" value="ECO:0000250"/>
    <property type="project" value="UniProtKB"/>
</dbReference>
<dbReference type="GO" id="GO:0042802">
    <property type="term" value="F:identical protein binding"/>
    <property type="evidence" value="ECO:0000250"/>
    <property type="project" value="UniProtKB"/>
</dbReference>
<dbReference type="GO" id="GO:0019722">
    <property type="term" value="P:calcium-mediated signaling"/>
    <property type="evidence" value="ECO:0000250"/>
    <property type="project" value="UniProtKB"/>
</dbReference>
<dbReference type="GO" id="GO:0050829">
    <property type="term" value="P:defense response to Gram-negative bacterium"/>
    <property type="evidence" value="ECO:0000250"/>
    <property type="project" value="UniProtKB"/>
</dbReference>
<dbReference type="GO" id="GO:0050830">
    <property type="term" value="P:defense response to Gram-positive bacterium"/>
    <property type="evidence" value="ECO:0000250"/>
    <property type="project" value="UniProtKB"/>
</dbReference>
<dbReference type="GO" id="GO:0002227">
    <property type="term" value="P:innate immune response in mucosa"/>
    <property type="evidence" value="ECO:0007669"/>
    <property type="project" value="TreeGrafter"/>
</dbReference>
<dbReference type="GO" id="GO:0060474">
    <property type="term" value="P:positive regulation of flagellated sperm motility involved in capacitation"/>
    <property type="evidence" value="ECO:0000250"/>
    <property type="project" value="UniProtKB"/>
</dbReference>
<dbReference type="FunFam" id="3.10.360.10:FF:000001">
    <property type="entry name" value="Beta-defensin 1"/>
    <property type="match status" value="1"/>
</dbReference>
<dbReference type="Gene3D" id="3.10.360.10">
    <property type="entry name" value="Antimicrobial Peptide, Beta-defensin 2, Chain A"/>
    <property type="match status" value="1"/>
</dbReference>
<dbReference type="InterPro" id="IPR001855">
    <property type="entry name" value="Defensin_beta-like"/>
</dbReference>
<dbReference type="PANTHER" id="PTHR21388:SF9">
    <property type="entry name" value="BETA-DEFENSIN 1"/>
    <property type="match status" value="1"/>
</dbReference>
<dbReference type="PANTHER" id="PTHR21388">
    <property type="entry name" value="BETA-DEFENSIN-RELATED"/>
    <property type="match status" value="1"/>
</dbReference>
<dbReference type="Pfam" id="PF00711">
    <property type="entry name" value="Defensin_beta"/>
    <property type="match status" value="1"/>
</dbReference>
<dbReference type="SUPFAM" id="SSF57392">
    <property type="entry name" value="Defensin-like"/>
    <property type="match status" value="1"/>
</dbReference>
<organism>
    <name type="scientific">Cercopithecus erythrogaster</name>
    <name type="common">Red-bellied monkey</name>
    <name type="synonym">White-throated monkey</name>
    <dbReference type="NCBI Taxonomy" id="161496"/>
    <lineage>
        <taxon>Eukaryota</taxon>
        <taxon>Metazoa</taxon>
        <taxon>Chordata</taxon>
        <taxon>Craniata</taxon>
        <taxon>Vertebrata</taxon>
        <taxon>Euteleostomi</taxon>
        <taxon>Mammalia</taxon>
        <taxon>Eutheria</taxon>
        <taxon>Euarchontoglires</taxon>
        <taxon>Primates</taxon>
        <taxon>Haplorrhini</taxon>
        <taxon>Catarrhini</taxon>
        <taxon>Cercopithecidae</taxon>
        <taxon>Cercopithecinae</taxon>
        <taxon>Cercopithecus</taxon>
    </lineage>
</organism>
<reference key="1">
    <citation type="journal article" date="2002" name="Immunogenetics">
        <title>Beta-defensin 1 gene variability among non-human primates.</title>
        <authorList>
            <person name="Del Pero M."/>
            <person name="Boniotto M."/>
            <person name="Zuccon D."/>
            <person name="Cervella P."/>
            <person name="Spano A."/>
            <person name="Amoroso A."/>
            <person name="Crovella S."/>
        </authorList>
    </citation>
    <scope>NUCLEOTIDE SEQUENCE [GENOMIC DNA]</scope>
</reference>
<gene>
    <name type="primary">DEFB1</name>
</gene>